<organism>
    <name type="scientific">Salmonella typhi</name>
    <dbReference type="NCBI Taxonomy" id="90370"/>
    <lineage>
        <taxon>Bacteria</taxon>
        <taxon>Pseudomonadati</taxon>
        <taxon>Pseudomonadota</taxon>
        <taxon>Gammaproteobacteria</taxon>
        <taxon>Enterobacterales</taxon>
        <taxon>Enterobacteriaceae</taxon>
        <taxon>Salmonella</taxon>
    </lineage>
</organism>
<feature type="chain" id="PRO_0000388933" description="UPF0756 membrane protein YeaL">
    <location>
        <begin position="1"/>
        <end position="148"/>
    </location>
</feature>
<feature type="transmembrane region" description="Helical" evidence="1">
    <location>
        <begin position="14"/>
        <end position="34"/>
    </location>
</feature>
<feature type="transmembrane region" description="Helical" evidence="1">
    <location>
        <begin position="51"/>
        <end position="71"/>
    </location>
</feature>
<feature type="transmembrane region" description="Helical" evidence="1">
    <location>
        <begin position="86"/>
        <end position="106"/>
    </location>
</feature>
<feature type="transmembrane region" description="Helical" evidence="1">
    <location>
        <begin position="121"/>
        <end position="141"/>
    </location>
</feature>
<proteinExistence type="inferred from homology"/>
<comment type="subcellular location">
    <subcellularLocation>
        <location evidence="1">Cell membrane</location>
        <topology evidence="1">Multi-pass membrane protein</topology>
    </subcellularLocation>
</comment>
<comment type="similarity">
    <text evidence="1">Belongs to the UPF0756 family.</text>
</comment>
<evidence type="ECO:0000255" key="1">
    <source>
        <dbReference type="HAMAP-Rule" id="MF_01874"/>
    </source>
</evidence>
<gene>
    <name evidence="1" type="primary">yeaL</name>
    <name type="ordered locus">STY1838</name>
    <name type="ordered locus">t1160</name>
</gene>
<keyword id="KW-1003">Cell membrane</keyword>
<keyword id="KW-0472">Membrane</keyword>
<keyword id="KW-0812">Transmembrane</keyword>
<keyword id="KW-1133">Transmembrane helix</keyword>
<dbReference type="EMBL" id="AE014613">
    <property type="protein sequence ID" value="AAO68820.1"/>
    <property type="molecule type" value="Genomic_DNA"/>
</dbReference>
<dbReference type="EMBL" id="AL513382">
    <property type="protein sequence ID" value="CAD02073.1"/>
    <property type="molecule type" value="Genomic_DNA"/>
</dbReference>
<dbReference type="RefSeq" id="NP_456229.1">
    <property type="nucleotide sequence ID" value="NC_003198.1"/>
</dbReference>
<dbReference type="RefSeq" id="WP_000460698.1">
    <property type="nucleotide sequence ID" value="NZ_WSUR01000034.1"/>
</dbReference>
<dbReference type="STRING" id="220341.gene:17585765"/>
<dbReference type="KEGG" id="stt:t1160"/>
<dbReference type="KEGG" id="sty:STY1838"/>
<dbReference type="PATRIC" id="fig|220341.7.peg.1851"/>
<dbReference type="eggNOG" id="COG2707">
    <property type="taxonomic scope" value="Bacteria"/>
</dbReference>
<dbReference type="HOGENOM" id="CLU_125889_0_0_6"/>
<dbReference type="OMA" id="SPAGWIA"/>
<dbReference type="OrthoDB" id="80306at2"/>
<dbReference type="Proteomes" id="UP000000541">
    <property type="component" value="Chromosome"/>
</dbReference>
<dbReference type="Proteomes" id="UP000002670">
    <property type="component" value="Chromosome"/>
</dbReference>
<dbReference type="GO" id="GO:0005886">
    <property type="term" value="C:plasma membrane"/>
    <property type="evidence" value="ECO:0007669"/>
    <property type="project" value="UniProtKB-SubCell"/>
</dbReference>
<dbReference type="HAMAP" id="MF_01874">
    <property type="entry name" value="UPF0756"/>
    <property type="match status" value="1"/>
</dbReference>
<dbReference type="InterPro" id="IPR007382">
    <property type="entry name" value="UPF0756_TM"/>
</dbReference>
<dbReference type="PANTHER" id="PTHR38452">
    <property type="entry name" value="UPF0756 MEMBRANE PROTEIN YEAL"/>
    <property type="match status" value="1"/>
</dbReference>
<dbReference type="PANTHER" id="PTHR38452:SF1">
    <property type="entry name" value="UPF0756 MEMBRANE PROTEIN YEAL"/>
    <property type="match status" value="1"/>
</dbReference>
<dbReference type="Pfam" id="PF04284">
    <property type="entry name" value="DUF441"/>
    <property type="match status" value="1"/>
</dbReference>
<name>YEAL_SALTI</name>
<reference key="1">
    <citation type="journal article" date="2001" name="Nature">
        <title>Complete genome sequence of a multiple drug resistant Salmonella enterica serovar Typhi CT18.</title>
        <authorList>
            <person name="Parkhill J."/>
            <person name="Dougan G."/>
            <person name="James K.D."/>
            <person name="Thomson N.R."/>
            <person name="Pickard D."/>
            <person name="Wain J."/>
            <person name="Churcher C.M."/>
            <person name="Mungall K.L."/>
            <person name="Bentley S.D."/>
            <person name="Holden M.T.G."/>
            <person name="Sebaihia M."/>
            <person name="Baker S."/>
            <person name="Basham D."/>
            <person name="Brooks K."/>
            <person name="Chillingworth T."/>
            <person name="Connerton P."/>
            <person name="Cronin A."/>
            <person name="Davis P."/>
            <person name="Davies R.M."/>
            <person name="Dowd L."/>
            <person name="White N."/>
            <person name="Farrar J."/>
            <person name="Feltwell T."/>
            <person name="Hamlin N."/>
            <person name="Haque A."/>
            <person name="Hien T.T."/>
            <person name="Holroyd S."/>
            <person name="Jagels K."/>
            <person name="Krogh A."/>
            <person name="Larsen T.S."/>
            <person name="Leather S."/>
            <person name="Moule S."/>
            <person name="O'Gaora P."/>
            <person name="Parry C."/>
            <person name="Quail M.A."/>
            <person name="Rutherford K.M."/>
            <person name="Simmonds M."/>
            <person name="Skelton J."/>
            <person name="Stevens K."/>
            <person name="Whitehead S."/>
            <person name="Barrell B.G."/>
        </authorList>
    </citation>
    <scope>NUCLEOTIDE SEQUENCE [LARGE SCALE GENOMIC DNA]</scope>
    <source>
        <strain>CT18</strain>
    </source>
</reference>
<reference key="2">
    <citation type="journal article" date="2003" name="J. Bacteriol.">
        <title>Comparative genomics of Salmonella enterica serovar Typhi strains Ty2 and CT18.</title>
        <authorList>
            <person name="Deng W."/>
            <person name="Liou S.-R."/>
            <person name="Plunkett G. III"/>
            <person name="Mayhew G.F."/>
            <person name="Rose D.J."/>
            <person name="Burland V."/>
            <person name="Kodoyianni V."/>
            <person name="Schwartz D.C."/>
            <person name="Blattner F.R."/>
        </authorList>
    </citation>
    <scope>NUCLEOTIDE SEQUENCE [LARGE SCALE GENOMIC DNA]</scope>
    <source>
        <strain>ATCC 700931 / Ty2</strain>
    </source>
</reference>
<sequence>MFDVTLLILLGLAALGFISHNTTVAVSILVLIIVRVTPLNTFFPWIEKQGLTVGIIILTIGVMAPIASGTLPPSTLIHSFVNWKSLVAIAVGVFVSWLGGRGITLMGNQPQLVAGLLVGTVLGVALFRGVPVGPLIAAGLVSLIVGKQ</sequence>
<accession>Q8Z6E5</accession>
<accession>Q7CAA4</accession>
<protein>
    <recommendedName>
        <fullName evidence="1">UPF0756 membrane protein YeaL</fullName>
    </recommendedName>
</protein>